<organism>
    <name type="scientific">Brucella suis (strain ATCC 23445 / NCTC 10510)</name>
    <dbReference type="NCBI Taxonomy" id="470137"/>
    <lineage>
        <taxon>Bacteria</taxon>
        <taxon>Pseudomonadati</taxon>
        <taxon>Pseudomonadota</taxon>
        <taxon>Alphaproteobacteria</taxon>
        <taxon>Hyphomicrobiales</taxon>
        <taxon>Brucellaceae</taxon>
        <taxon>Brucella/Ochrobactrum group</taxon>
        <taxon>Brucella</taxon>
    </lineage>
</organism>
<keyword id="KW-0030">Aminoacyl-tRNA synthetase</keyword>
<keyword id="KW-0067">ATP-binding</keyword>
<keyword id="KW-0963">Cytoplasm</keyword>
<keyword id="KW-0436">Ligase</keyword>
<keyword id="KW-0479">Metal-binding</keyword>
<keyword id="KW-0547">Nucleotide-binding</keyword>
<keyword id="KW-0648">Protein biosynthesis</keyword>
<keyword id="KW-0862">Zinc</keyword>
<sequence length="506" mass="56303">MPDTAPQLRLYNMLTRTKEAFAPIDAKNVRMYVCGPTVYDFAHIGNARPVIVFDVLFRLLRHVYGAQHVTYARNITDVDDKINARAARDYPDLPFNEAIRKVTESTNAQFQADVTALGNLQPTVQPRATEHMDEMRAMIDRLVQRGVAYVAQDHVLFSPSAMNARKGPRYGALARRSLDEMLAGARVDVASYKRDEMDFVLWKPSKKGEPGWPSPAGIETLGRPGWHIECSAMSMAKLLEPFGGGLKCDDPERNQFDIHGGGIDLVFPHHENEIAQSCCALGTERMANIWMHNGFLQVEGQKMSKSLGNFITIRDVLNDGLPQLGEWGDNTVRDRWAGLAARLSMLQTHYREPINWTAQRLAESADELHRWYGLLRDEGFGAPEKLSHASAVAAALCDDLNSWAAITALRQAFKVRDVAALGEGMALMGLLDPYFVTASDVPIFARADVDASAIAARIAERLNFINAKNWAEADRIRDELLQEGVQLKDSKDPATGERITTWDVVG</sequence>
<name>SYC_BRUSI</name>
<comment type="catalytic activity">
    <reaction evidence="1">
        <text>tRNA(Cys) + L-cysteine + ATP = L-cysteinyl-tRNA(Cys) + AMP + diphosphate</text>
        <dbReference type="Rhea" id="RHEA:17773"/>
        <dbReference type="Rhea" id="RHEA-COMP:9661"/>
        <dbReference type="Rhea" id="RHEA-COMP:9679"/>
        <dbReference type="ChEBI" id="CHEBI:30616"/>
        <dbReference type="ChEBI" id="CHEBI:33019"/>
        <dbReference type="ChEBI" id="CHEBI:35235"/>
        <dbReference type="ChEBI" id="CHEBI:78442"/>
        <dbReference type="ChEBI" id="CHEBI:78517"/>
        <dbReference type="ChEBI" id="CHEBI:456215"/>
        <dbReference type="EC" id="6.1.1.16"/>
    </reaction>
</comment>
<comment type="cofactor">
    <cofactor evidence="1">
        <name>Zn(2+)</name>
        <dbReference type="ChEBI" id="CHEBI:29105"/>
    </cofactor>
    <text evidence="1">Binds 1 zinc ion per subunit.</text>
</comment>
<comment type="subunit">
    <text evidence="1">Monomer.</text>
</comment>
<comment type="subcellular location">
    <subcellularLocation>
        <location evidence="1">Cytoplasm</location>
    </subcellularLocation>
</comment>
<comment type="similarity">
    <text evidence="1">Belongs to the class-I aminoacyl-tRNA synthetase family.</text>
</comment>
<protein>
    <recommendedName>
        <fullName evidence="1">Cysteine--tRNA ligase</fullName>
        <ecNumber evidence="1">6.1.1.16</ecNumber>
    </recommendedName>
    <alternativeName>
        <fullName evidence="1">Cysteinyl-tRNA synthetase</fullName>
        <shortName evidence="1">CysRS</shortName>
    </alternativeName>
</protein>
<proteinExistence type="inferred from homology"/>
<gene>
    <name evidence="1" type="primary">cysS</name>
    <name type="ordered locus">BSUIS_A0705</name>
</gene>
<feature type="chain" id="PRO_0000332796" description="Cysteine--tRNA ligase">
    <location>
        <begin position="1"/>
        <end position="506"/>
    </location>
</feature>
<feature type="short sequence motif" description="'HIGH' region">
    <location>
        <begin position="36"/>
        <end position="46"/>
    </location>
</feature>
<feature type="short sequence motif" description="'KMSKS' region">
    <location>
        <begin position="302"/>
        <end position="306"/>
    </location>
</feature>
<feature type="binding site" evidence="1">
    <location>
        <position position="34"/>
    </location>
    <ligand>
        <name>Zn(2+)</name>
        <dbReference type="ChEBI" id="CHEBI:29105"/>
    </ligand>
</feature>
<feature type="binding site" evidence="1">
    <location>
        <position position="230"/>
    </location>
    <ligand>
        <name>Zn(2+)</name>
        <dbReference type="ChEBI" id="CHEBI:29105"/>
    </ligand>
</feature>
<feature type="binding site" evidence="1">
    <location>
        <position position="269"/>
    </location>
    <ligand>
        <name>Zn(2+)</name>
        <dbReference type="ChEBI" id="CHEBI:29105"/>
    </ligand>
</feature>
<feature type="binding site" evidence="1">
    <location>
        <position position="273"/>
    </location>
    <ligand>
        <name>Zn(2+)</name>
        <dbReference type="ChEBI" id="CHEBI:29105"/>
    </ligand>
</feature>
<feature type="binding site" evidence="1">
    <location>
        <position position="305"/>
    </location>
    <ligand>
        <name>ATP</name>
        <dbReference type="ChEBI" id="CHEBI:30616"/>
    </ligand>
</feature>
<dbReference type="EC" id="6.1.1.16" evidence="1"/>
<dbReference type="EMBL" id="CP000911">
    <property type="protein sequence ID" value="ABY37782.1"/>
    <property type="molecule type" value="Genomic_DNA"/>
</dbReference>
<dbReference type="RefSeq" id="WP_006072458.1">
    <property type="nucleotide sequence ID" value="NC_010169.1"/>
</dbReference>
<dbReference type="SMR" id="B0CL02"/>
<dbReference type="KEGG" id="bmt:BSUIS_A0705"/>
<dbReference type="HOGENOM" id="CLU_013528_0_1_5"/>
<dbReference type="Proteomes" id="UP000008545">
    <property type="component" value="Chromosome I"/>
</dbReference>
<dbReference type="GO" id="GO:0005829">
    <property type="term" value="C:cytosol"/>
    <property type="evidence" value="ECO:0007669"/>
    <property type="project" value="TreeGrafter"/>
</dbReference>
<dbReference type="GO" id="GO:0005524">
    <property type="term" value="F:ATP binding"/>
    <property type="evidence" value="ECO:0007669"/>
    <property type="project" value="UniProtKB-UniRule"/>
</dbReference>
<dbReference type="GO" id="GO:0004817">
    <property type="term" value="F:cysteine-tRNA ligase activity"/>
    <property type="evidence" value="ECO:0007669"/>
    <property type="project" value="UniProtKB-UniRule"/>
</dbReference>
<dbReference type="GO" id="GO:0008270">
    <property type="term" value="F:zinc ion binding"/>
    <property type="evidence" value="ECO:0007669"/>
    <property type="project" value="UniProtKB-UniRule"/>
</dbReference>
<dbReference type="GO" id="GO:0006423">
    <property type="term" value="P:cysteinyl-tRNA aminoacylation"/>
    <property type="evidence" value="ECO:0007669"/>
    <property type="project" value="UniProtKB-UniRule"/>
</dbReference>
<dbReference type="CDD" id="cd00672">
    <property type="entry name" value="CysRS_core"/>
    <property type="match status" value="1"/>
</dbReference>
<dbReference type="Gene3D" id="1.20.120.1910">
    <property type="entry name" value="Cysteine-tRNA ligase, C-terminal anti-codon recognition domain"/>
    <property type="match status" value="1"/>
</dbReference>
<dbReference type="Gene3D" id="3.40.50.620">
    <property type="entry name" value="HUPs"/>
    <property type="match status" value="1"/>
</dbReference>
<dbReference type="HAMAP" id="MF_00041">
    <property type="entry name" value="Cys_tRNA_synth"/>
    <property type="match status" value="1"/>
</dbReference>
<dbReference type="InterPro" id="IPR015803">
    <property type="entry name" value="Cys-tRNA-ligase"/>
</dbReference>
<dbReference type="InterPro" id="IPR024909">
    <property type="entry name" value="Cys-tRNA/MSH_ligase"/>
</dbReference>
<dbReference type="InterPro" id="IPR014729">
    <property type="entry name" value="Rossmann-like_a/b/a_fold"/>
</dbReference>
<dbReference type="InterPro" id="IPR032678">
    <property type="entry name" value="tRNA-synt_1_cat_dom"/>
</dbReference>
<dbReference type="InterPro" id="IPR009080">
    <property type="entry name" value="tRNAsynth_Ia_anticodon-bd"/>
</dbReference>
<dbReference type="NCBIfam" id="TIGR00435">
    <property type="entry name" value="cysS"/>
    <property type="match status" value="1"/>
</dbReference>
<dbReference type="PANTHER" id="PTHR10890:SF3">
    <property type="entry name" value="CYSTEINE--TRNA LIGASE, CYTOPLASMIC"/>
    <property type="match status" value="1"/>
</dbReference>
<dbReference type="PANTHER" id="PTHR10890">
    <property type="entry name" value="CYSTEINYL-TRNA SYNTHETASE"/>
    <property type="match status" value="1"/>
</dbReference>
<dbReference type="Pfam" id="PF01406">
    <property type="entry name" value="tRNA-synt_1e"/>
    <property type="match status" value="1"/>
</dbReference>
<dbReference type="PRINTS" id="PR00983">
    <property type="entry name" value="TRNASYNTHCYS"/>
</dbReference>
<dbReference type="SUPFAM" id="SSF47323">
    <property type="entry name" value="Anticodon-binding domain of a subclass of class I aminoacyl-tRNA synthetases"/>
    <property type="match status" value="1"/>
</dbReference>
<dbReference type="SUPFAM" id="SSF52374">
    <property type="entry name" value="Nucleotidylyl transferase"/>
    <property type="match status" value="1"/>
</dbReference>
<reference key="1">
    <citation type="submission" date="2007-12" db="EMBL/GenBank/DDBJ databases">
        <title>Brucella suis ATCC 23445 whole genome shotgun sequencing project.</title>
        <authorList>
            <person name="Setubal J.C."/>
            <person name="Bowns C."/>
            <person name="Boyle S."/>
            <person name="Crasta O.R."/>
            <person name="Czar M.J."/>
            <person name="Dharmanolla C."/>
            <person name="Gillespie J.J."/>
            <person name="Kenyon R.W."/>
            <person name="Lu J."/>
            <person name="Mane S."/>
            <person name="Mohapatra S."/>
            <person name="Nagrani S."/>
            <person name="Purkayastha A."/>
            <person name="Rajasimha H.K."/>
            <person name="Shallom J.M."/>
            <person name="Shallom S."/>
            <person name="Shukla M."/>
            <person name="Snyder E.E."/>
            <person name="Sobral B.W."/>
            <person name="Wattam A.R."/>
            <person name="Will R."/>
            <person name="Williams K."/>
            <person name="Yoo H."/>
            <person name="Bruce D."/>
            <person name="Detter C."/>
            <person name="Munk C."/>
            <person name="Brettin T.S."/>
        </authorList>
    </citation>
    <scope>NUCLEOTIDE SEQUENCE [LARGE SCALE GENOMIC DNA]</scope>
    <source>
        <strain>ATCC 23445 / NCTC 10510</strain>
    </source>
</reference>
<evidence type="ECO:0000255" key="1">
    <source>
        <dbReference type="HAMAP-Rule" id="MF_00041"/>
    </source>
</evidence>
<accession>B0CL02</accession>